<organism>
    <name type="scientific">Haloquadratum walsbyi (strain DSM 16790 / HBSQ001)</name>
    <dbReference type="NCBI Taxonomy" id="362976"/>
    <lineage>
        <taxon>Archaea</taxon>
        <taxon>Methanobacteriati</taxon>
        <taxon>Methanobacteriota</taxon>
        <taxon>Stenosarchaea group</taxon>
        <taxon>Halobacteria</taxon>
        <taxon>Halobacteriales</taxon>
        <taxon>Haloferacaceae</taxon>
        <taxon>Haloquadratum</taxon>
    </lineage>
</organism>
<name>SYS_HALWD</name>
<sequence length="460" mass="51743">MIDRQLLRKNPDAIRGALDEKGVTDVNLDQILTLDQEWRERKARGDELRHERNQISSKIGKLKAAGDEDAASEAIAQSQELKNELEEIEREADKLKSELDTAMLKIPQVPDDAVPVGTDESENVERRREGFDSLRSLPDTVIPHYDLGEELEILDFERGAKVTGGGFYFAKGDGARLEHALVQFMLDIHREQGYQDVFPPIPVNSQSMVGTGQFPKFTEDAYRIGETNDEPWDNDDLWLCPTAEVPVTNMYRDEILLDDDLPVKIQAYTPNFRREAGEHGTETRGIVRVHQFNKVELVNFVRPEDSAERFDGLLTEAEVVLQRLGLPYRILEMCTGDLGFTQRKKYDIEVWAPGDDMATGPDIGGRWLEVSSVSNFGAFQSRRAGLRYRPERHESASYLHTLNGSGVAVPRVMVAIMEYYQNDDGTITIPEPLQPYMNGLSVIEGHDPVGEAAVGAGKRE</sequence>
<dbReference type="EC" id="6.1.1.11" evidence="1"/>
<dbReference type="EMBL" id="AM180088">
    <property type="protein sequence ID" value="CAJ53238.1"/>
    <property type="molecule type" value="Genomic_DNA"/>
</dbReference>
<dbReference type="RefSeq" id="WP_011572344.1">
    <property type="nucleotide sequence ID" value="NC_008212.1"/>
</dbReference>
<dbReference type="SMR" id="Q18FL9"/>
<dbReference type="STRING" id="362976.HQ_3138A"/>
<dbReference type="GeneID" id="4194692"/>
<dbReference type="KEGG" id="hwa:HQ_3138A"/>
<dbReference type="eggNOG" id="arCOG00403">
    <property type="taxonomic scope" value="Archaea"/>
</dbReference>
<dbReference type="HOGENOM" id="CLU_023797_0_1_2"/>
<dbReference type="UniPathway" id="UPA00906">
    <property type="reaction ID" value="UER00895"/>
</dbReference>
<dbReference type="Proteomes" id="UP000001975">
    <property type="component" value="Chromosome"/>
</dbReference>
<dbReference type="GO" id="GO:0005737">
    <property type="term" value="C:cytoplasm"/>
    <property type="evidence" value="ECO:0007669"/>
    <property type="project" value="UniProtKB-SubCell"/>
</dbReference>
<dbReference type="GO" id="GO:0005524">
    <property type="term" value="F:ATP binding"/>
    <property type="evidence" value="ECO:0007669"/>
    <property type="project" value="UniProtKB-UniRule"/>
</dbReference>
<dbReference type="GO" id="GO:0004828">
    <property type="term" value="F:serine-tRNA ligase activity"/>
    <property type="evidence" value="ECO:0007669"/>
    <property type="project" value="UniProtKB-UniRule"/>
</dbReference>
<dbReference type="GO" id="GO:0016260">
    <property type="term" value="P:selenocysteine biosynthetic process"/>
    <property type="evidence" value="ECO:0007669"/>
    <property type="project" value="UniProtKB-UniRule"/>
</dbReference>
<dbReference type="GO" id="GO:0006434">
    <property type="term" value="P:seryl-tRNA aminoacylation"/>
    <property type="evidence" value="ECO:0007669"/>
    <property type="project" value="UniProtKB-UniRule"/>
</dbReference>
<dbReference type="CDD" id="cd00770">
    <property type="entry name" value="SerRS_core"/>
    <property type="match status" value="1"/>
</dbReference>
<dbReference type="Gene3D" id="3.30.930.10">
    <property type="entry name" value="Bira Bifunctional Protein, Domain 2"/>
    <property type="match status" value="1"/>
</dbReference>
<dbReference type="Gene3D" id="1.10.287.40">
    <property type="entry name" value="Serine-tRNA synthetase, tRNA binding domain"/>
    <property type="match status" value="1"/>
</dbReference>
<dbReference type="HAMAP" id="MF_00176">
    <property type="entry name" value="Ser_tRNA_synth_type1"/>
    <property type="match status" value="1"/>
</dbReference>
<dbReference type="InterPro" id="IPR002314">
    <property type="entry name" value="aa-tRNA-synt_IIb"/>
</dbReference>
<dbReference type="InterPro" id="IPR006195">
    <property type="entry name" value="aa-tRNA-synth_II"/>
</dbReference>
<dbReference type="InterPro" id="IPR045864">
    <property type="entry name" value="aa-tRNA-synth_II/BPL/LPL"/>
</dbReference>
<dbReference type="InterPro" id="IPR002317">
    <property type="entry name" value="Ser-tRNA-ligase_type_1"/>
</dbReference>
<dbReference type="InterPro" id="IPR015866">
    <property type="entry name" value="Ser-tRNA-synth_1_N"/>
</dbReference>
<dbReference type="InterPro" id="IPR042103">
    <property type="entry name" value="SerRS_1_N_sf"/>
</dbReference>
<dbReference type="InterPro" id="IPR033729">
    <property type="entry name" value="SerRS_core"/>
</dbReference>
<dbReference type="InterPro" id="IPR010978">
    <property type="entry name" value="tRNA-bd_arm"/>
</dbReference>
<dbReference type="NCBIfam" id="TIGR00414">
    <property type="entry name" value="serS"/>
    <property type="match status" value="1"/>
</dbReference>
<dbReference type="PANTHER" id="PTHR43697:SF1">
    <property type="entry name" value="SERINE--TRNA LIGASE"/>
    <property type="match status" value="1"/>
</dbReference>
<dbReference type="PANTHER" id="PTHR43697">
    <property type="entry name" value="SERYL-TRNA SYNTHETASE"/>
    <property type="match status" value="1"/>
</dbReference>
<dbReference type="Pfam" id="PF02403">
    <property type="entry name" value="Seryl_tRNA_N"/>
    <property type="match status" value="1"/>
</dbReference>
<dbReference type="Pfam" id="PF00587">
    <property type="entry name" value="tRNA-synt_2b"/>
    <property type="match status" value="1"/>
</dbReference>
<dbReference type="PIRSF" id="PIRSF001529">
    <property type="entry name" value="Ser-tRNA-synth_IIa"/>
    <property type="match status" value="1"/>
</dbReference>
<dbReference type="PRINTS" id="PR00981">
    <property type="entry name" value="TRNASYNTHSER"/>
</dbReference>
<dbReference type="SUPFAM" id="SSF55681">
    <property type="entry name" value="Class II aaRS and biotin synthetases"/>
    <property type="match status" value="1"/>
</dbReference>
<dbReference type="SUPFAM" id="SSF46589">
    <property type="entry name" value="tRNA-binding arm"/>
    <property type="match status" value="1"/>
</dbReference>
<dbReference type="PROSITE" id="PS50862">
    <property type="entry name" value="AA_TRNA_LIGASE_II"/>
    <property type="match status" value="1"/>
</dbReference>
<keyword id="KW-0030">Aminoacyl-tRNA synthetase</keyword>
<keyword id="KW-0067">ATP-binding</keyword>
<keyword id="KW-0963">Cytoplasm</keyword>
<keyword id="KW-0436">Ligase</keyword>
<keyword id="KW-0547">Nucleotide-binding</keyword>
<keyword id="KW-0648">Protein biosynthesis</keyword>
<keyword id="KW-1185">Reference proteome</keyword>
<accession>Q18FL9</accession>
<comment type="function">
    <text evidence="1">Catalyzes the attachment of serine to tRNA(Ser). Is also able to aminoacylate tRNA(Sec) with serine, to form the misacylated tRNA L-seryl-tRNA(Sec), which will be further converted into selenocysteinyl-tRNA(Sec).</text>
</comment>
<comment type="catalytic activity">
    <reaction evidence="1">
        <text>tRNA(Ser) + L-serine + ATP = L-seryl-tRNA(Ser) + AMP + diphosphate + H(+)</text>
        <dbReference type="Rhea" id="RHEA:12292"/>
        <dbReference type="Rhea" id="RHEA-COMP:9669"/>
        <dbReference type="Rhea" id="RHEA-COMP:9703"/>
        <dbReference type="ChEBI" id="CHEBI:15378"/>
        <dbReference type="ChEBI" id="CHEBI:30616"/>
        <dbReference type="ChEBI" id="CHEBI:33019"/>
        <dbReference type="ChEBI" id="CHEBI:33384"/>
        <dbReference type="ChEBI" id="CHEBI:78442"/>
        <dbReference type="ChEBI" id="CHEBI:78533"/>
        <dbReference type="ChEBI" id="CHEBI:456215"/>
        <dbReference type="EC" id="6.1.1.11"/>
    </reaction>
</comment>
<comment type="catalytic activity">
    <reaction evidence="1">
        <text>tRNA(Sec) + L-serine + ATP = L-seryl-tRNA(Sec) + AMP + diphosphate + H(+)</text>
        <dbReference type="Rhea" id="RHEA:42580"/>
        <dbReference type="Rhea" id="RHEA-COMP:9742"/>
        <dbReference type="Rhea" id="RHEA-COMP:10128"/>
        <dbReference type="ChEBI" id="CHEBI:15378"/>
        <dbReference type="ChEBI" id="CHEBI:30616"/>
        <dbReference type="ChEBI" id="CHEBI:33019"/>
        <dbReference type="ChEBI" id="CHEBI:33384"/>
        <dbReference type="ChEBI" id="CHEBI:78442"/>
        <dbReference type="ChEBI" id="CHEBI:78533"/>
        <dbReference type="ChEBI" id="CHEBI:456215"/>
        <dbReference type="EC" id="6.1.1.11"/>
    </reaction>
</comment>
<comment type="pathway">
    <text evidence="1">Aminoacyl-tRNA biosynthesis; selenocysteinyl-tRNA(Sec) biosynthesis; L-seryl-tRNA(Sec) from L-serine and tRNA(Sec): step 1/1.</text>
</comment>
<comment type="subunit">
    <text evidence="1">Homodimer. The tRNA molecule binds across the dimer.</text>
</comment>
<comment type="subcellular location">
    <subcellularLocation>
        <location evidence="1">Cytoplasm</location>
    </subcellularLocation>
</comment>
<comment type="domain">
    <text evidence="1">Consists of two distinct domains, a catalytic core and a N-terminal extension that is involved in tRNA binding.</text>
</comment>
<comment type="similarity">
    <text evidence="1">Belongs to the class-II aminoacyl-tRNA synthetase family. Type-1 seryl-tRNA synthetase subfamily.</text>
</comment>
<proteinExistence type="inferred from homology"/>
<evidence type="ECO:0000255" key="1">
    <source>
        <dbReference type="HAMAP-Rule" id="MF_00176"/>
    </source>
</evidence>
<feature type="chain" id="PRO_1000019696" description="Serine--tRNA ligase">
    <location>
        <begin position="1"/>
        <end position="460"/>
    </location>
</feature>
<feature type="binding site" evidence="1">
    <location>
        <begin position="242"/>
        <end position="244"/>
    </location>
    <ligand>
        <name>L-serine</name>
        <dbReference type="ChEBI" id="CHEBI:33384"/>
    </ligand>
</feature>
<feature type="binding site" evidence="1">
    <location>
        <begin position="273"/>
        <end position="275"/>
    </location>
    <ligand>
        <name>ATP</name>
        <dbReference type="ChEBI" id="CHEBI:30616"/>
    </ligand>
</feature>
<feature type="binding site" evidence="1">
    <location>
        <position position="289"/>
    </location>
    <ligand>
        <name>ATP</name>
        <dbReference type="ChEBI" id="CHEBI:30616"/>
    </ligand>
</feature>
<feature type="binding site" evidence="1">
    <location>
        <position position="296"/>
    </location>
    <ligand>
        <name>L-serine</name>
        <dbReference type="ChEBI" id="CHEBI:33384"/>
    </ligand>
</feature>
<feature type="binding site" evidence="1">
    <location>
        <begin position="369"/>
        <end position="372"/>
    </location>
    <ligand>
        <name>ATP</name>
        <dbReference type="ChEBI" id="CHEBI:30616"/>
    </ligand>
</feature>
<feature type="binding site" evidence="1">
    <location>
        <position position="405"/>
    </location>
    <ligand>
        <name>L-serine</name>
        <dbReference type="ChEBI" id="CHEBI:33384"/>
    </ligand>
</feature>
<reference key="1">
    <citation type="journal article" date="2006" name="BMC Genomics">
        <title>The genome of the square archaeon Haloquadratum walsbyi: life at the limits of water activity.</title>
        <authorList>
            <person name="Bolhuis H."/>
            <person name="Palm P."/>
            <person name="Wende A."/>
            <person name="Falb M."/>
            <person name="Rampp M."/>
            <person name="Rodriguez-Valera F."/>
            <person name="Pfeiffer F."/>
            <person name="Oesterhelt D."/>
        </authorList>
    </citation>
    <scope>NUCLEOTIDE SEQUENCE [LARGE SCALE GENOMIC DNA]</scope>
    <source>
        <strain>DSM 16790 / HBSQ001</strain>
    </source>
</reference>
<protein>
    <recommendedName>
        <fullName evidence="1">Serine--tRNA ligase</fullName>
        <ecNumber evidence="1">6.1.1.11</ecNumber>
    </recommendedName>
    <alternativeName>
        <fullName evidence="1">Seryl-tRNA synthetase</fullName>
        <shortName evidence="1">SerRS</shortName>
    </alternativeName>
    <alternativeName>
        <fullName evidence="1">Seryl-tRNA(Ser/Sec) synthetase</fullName>
    </alternativeName>
</protein>
<gene>
    <name evidence="1" type="primary">serS</name>
    <name type="ordered locus">HQ_3138A</name>
</gene>